<feature type="chain" id="PRO_0000320890" description="Protein translocase subunit SecA">
    <location>
        <begin position="1"/>
        <end position="1107"/>
    </location>
</feature>
<feature type="region of interest" description="Disordered" evidence="2">
    <location>
        <begin position="1036"/>
        <end position="1107"/>
    </location>
</feature>
<feature type="compositionally biased region" description="Basic and acidic residues" evidence="2">
    <location>
        <begin position="1036"/>
        <end position="1066"/>
    </location>
</feature>
<feature type="compositionally biased region" description="Basic residues" evidence="2">
    <location>
        <begin position="1097"/>
        <end position="1107"/>
    </location>
</feature>
<feature type="binding site" evidence="1">
    <location>
        <position position="169"/>
    </location>
    <ligand>
        <name>ATP</name>
        <dbReference type="ChEBI" id="CHEBI:30616"/>
    </ligand>
</feature>
<feature type="binding site" evidence="1">
    <location>
        <begin position="187"/>
        <end position="191"/>
    </location>
    <ligand>
        <name>ATP</name>
        <dbReference type="ChEBI" id="CHEBI:30616"/>
    </ligand>
</feature>
<feature type="binding site" evidence="1">
    <location>
        <position position="688"/>
    </location>
    <ligand>
        <name>ATP</name>
        <dbReference type="ChEBI" id="CHEBI:30616"/>
    </ligand>
</feature>
<feature type="binding site" evidence="1">
    <location>
        <position position="1091"/>
    </location>
    <ligand>
        <name>Zn(2+)</name>
        <dbReference type="ChEBI" id="CHEBI:29105"/>
    </ligand>
</feature>
<feature type="binding site" evidence="1">
    <location>
        <position position="1093"/>
    </location>
    <ligand>
        <name>Zn(2+)</name>
        <dbReference type="ChEBI" id="CHEBI:29105"/>
    </ligand>
</feature>
<feature type="binding site" evidence="1">
    <location>
        <position position="1102"/>
    </location>
    <ligand>
        <name>Zn(2+)</name>
        <dbReference type="ChEBI" id="CHEBI:29105"/>
    </ligand>
</feature>
<feature type="binding site" evidence="1">
    <location>
        <position position="1103"/>
    </location>
    <ligand>
        <name>Zn(2+)</name>
        <dbReference type="ChEBI" id="CHEBI:29105"/>
    </ligand>
</feature>
<evidence type="ECO:0000255" key="1">
    <source>
        <dbReference type="HAMAP-Rule" id="MF_01382"/>
    </source>
</evidence>
<evidence type="ECO:0000256" key="2">
    <source>
        <dbReference type="SAM" id="MobiDB-lite"/>
    </source>
</evidence>
<reference key="1">
    <citation type="journal article" date="2003" name="J. Bacteriol.">
        <title>Complete genome sequence of the oral pathogenic bacterium Porphyromonas gingivalis strain W83.</title>
        <authorList>
            <person name="Nelson K.E."/>
            <person name="Fleischmann R.D."/>
            <person name="DeBoy R.T."/>
            <person name="Paulsen I.T."/>
            <person name="Fouts D.E."/>
            <person name="Eisen J.A."/>
            <person name="Daugherty S.C."/>
            <person name="Dodson R.J."/>
            <person name="Durkin A.S."/>
            <person name="Gwinn M.L."/>
            <person name="Haft D.H."/>
            <person name="Kolonay J.F."/>
            <person name="Nelson W.C."/>
            <person name="Mason T.M."/>
            <person name="Tallon L."/>
            <person name="Gray J."/>
            <person name="Granger D."/>
            <person name="Tettelin H."/>
            <person name="Dong H."/>
            <person name="Galvin J.L."/>
            <person name="Duncan M.J."/>
            <person name="Dewhirst F.E."/>
            <person name="Fraser C.M."/>
        </authorList>
    </citation>
    <scope>NUCLEOTIDE SEQUENCE [LARGE SCALE GENOMIC DNA]</scope>
    <source>
        <strain>ATCC BAA-308 / W83</strain>
    </source>
</reference>
<dbReference type="EC" id="7.4.2.8" evidence="1"/>
<dbReference type="EMBL" id="AE015924">
    <property type="protein sequence ID" value="AAQ65708.1"/>
    <property type="molecule type" value="Genomic_DNA"/>
</dbReference>
<dbReference type="SMR" id="Q7MWS5"/>
<dbReference type="STRING" id="242619.PG_0514"/>
<dbReference type="EnsemblBacteria" id="AAQ65708">
    <property type="protein sequence ID" value="AAQ65708"/>
    <property type="gene ID" value="PG_0514"/>
</dbReference>
<dbReference type="KEGG" id="pgi:PG_0514"/>
<dbReference type="eggNOG" id="COG0653">
    <property type="taxonomic scope" value="Bacteria"/>
</dbReference>
<dbReference type="HOGENOM" id="CLU_005314_3_0_10"/>
<dbReference type="Proteomes" id="UP000000588">
    <property type="component" value="Chromosome"/>
</dbReference>
<dbReference type="GO" id="GO:0031522">
    <property type="term" value="C:cell envelope Sec protein transport complex"/>
    <property type="evidence" value="ECO:0007669"/>
    <property type="project" value="TreeGrafter"/>
</dbReference>
<dbReference type="GO" id="GO:0005829">
    <property type="term" value="C:cytosol"/>
    <property type="evidence" value="ECO:0007669"/>
    <property type="project" value="TreeGrafter"/>
</dbReference>
<dbReference type="GO" id="GO:0005886">
    <property type="term" value="C:plasma membrane"/>
    <property type="evidence" value="ECO:0007669"/>
    <property type="project" value="UniProtKB-SubCell"/>
</dbReference>
<dbReference type="GO" id="GO:0005524">
    <property type="term" value="F:ATP binding"/>
    <property type="evidence" value="ECO:0007669"/>
    <property type="project" value="UniProtKB-UniRule"/>
</dbReference>
<dbReference type="GO" id="GO:0046872">
    <property type="term" value="F:metal ion binding"/>
    <property type="evidence" value="ECO:0007669"/>
    <property type="project" value="UniProtKB-KW"/>
</dbReference>
<dbReference type="GO" id="GO:0008564">
    <property type="term" value="F:protein-exporting ATPase activity"/>
    <property type="evidence" value="ECO:0007669"/>
    <property type="project" value="UniProtKB-EC"/>
</dbReference>
<dbReference type="GO" id="GO:0065002">
    <property type="term" value="P:intracellular protein transmembrane transport"/>
    <property type="evidence" value="ECO:0007669"/>
    <property type="project" value="UniProtKB-UniRule"/>
</dbReference>
<dbReference type="GO" id="GO:0017038">
    <property type="term" value="P:protein import"/>
    <property type="evidence" value="ECO:0007669"/>
    <property type="project" value="InterPro"/>
</dbReference>
<dbReference type="GO" id="GO:0006605">
    <property type="term" value="P:protein targeting"/>
    <property type="evidence" value="ECO:0007669"/>
    <property type="project" value="UniProtKB-UniRule"/>
</dbReference>
<dbReference type="GO" id="GO:0043952">
    <property type="term" value="P:protein transport by the Sec complex"/>
    <property type="evidence" value="ECO:0007669"/>
    <property type="project" value="TreeGrafter"/>
</dbReference>
<dbReference type="CDD" id="cd17928">
    <property type="entry name" value="DEXDc_SecA"/>
    <property type="match status" value="1"/>
</dbReference>
<dbReference type="CDD" id="cd18803">
    <property type="entry name" value="SF2_C_secA"/>
    <property type="match status" value="1"/>
</dbReference>
<dbReference type="FunFam" id="3.40.50.300:FF:000246">
    <property type="entry name" value="Preprotein translocase subunit SecA"/>
    <property type="match status" value="1"/>
</dbReference>
<dbReference type="FunFam" id="3.40.50.300:FF:000694">
    <property type="entry name" value="Preprotein translocase subunit SecA"/>
    <property type="match status" value="1"/>
</dbReference>
<dbReference type="Gene3D" id="1.10.3060.10">
    <property type="entry name" value="Helical scaffold and wing domains of SecA"/>
    <property type="match status" value="1"/>
</dbReference>
<dbReference type="Gene3D" id="3.40.50.300">
    <property type="entry name" value="P-loop containing nucleotide triphosphate hydrolases"/>
    <property type="match status" value="2"/>
</dbReference>
<dbReference type="Gene3D" id="3.90.1440.10">
    <property type="entry name" value="SecA, preprotein cross-linking domain"/>
    <property type="match status" value="1"/>
</dbReference>
<dbReference type="HAMAP" id="MF_01382">
    <property type="entry name" value="SecA"/>
    <property type="match status" value="1"/>
</dbReference>
<dbReference type="InterPro" id="IPR014001">
    <property type="entry name" value="Helicase_ATP-bd"/>
</dbReference>
<dbReference type="InterPro" id="IPR001650">
    <property type="entry name" value="Helicase_C-like"/>
</dbReference>
<dbReference type="InterPro" id="IPR027417">
    <property type="entry name" value="P-loop_NTPase"/>
</dbReference>
<dbReference type="InterPro" id="IPR004027">
    <property type="entry name" value="SEC_C_motif"/>
</dbReference>
<dbReference type="InterPro" id="IPR000185">
    <property type="entry name" value="SecA"/>
</dbReference>
<dbReference type="InterPro" id="IPR020937">
    <property type="entry name" value="SecA_CS"/>
</dbReference>
<dbReference type="InterPro" id="IPR011115">
    <property type="entry name" value="SecA_DEAD"/>
</dbReference>
<dbReference type="InterPro" id="IPR014018">
    <property type="entry name" value="SecA_motor_DEAD"/>
</dbReference>
<dbReference type="InterPro" id="IPR011130">
    <property type="entry name" value="SecA_preprotein_X-link_dom"/>
</dbReference>
<dbReference type="InterPro" id="IPR044722">
    <property type="entry name" value="SecA_SF2_C"/>
</dbReference>
<dbReference type="InterPro" id="IPR011116">
    <property type="entry name" value="SecA_Wing/Scaffold"/>
</dbReference>
<dbReference type="InterPro" id="IPR036266">
    <property type="entry name" value="SecA_Wing/Scaffold_sf"/>
</dbReference>
<dbReference type="InterPro" id="IPR036670">
    <property type="entry name" value="SecA_X-link_sf"/>
</dbReference>
<dbReference type="NCBIfam" id="NF009536">
    <property type="entry name" value="PRK12901.1"/>
    <property type="match status" value="1"/>
</dbReference>
<dbReference type="NCBIfam" id="TIGR00963">
    <property type="entry name" value="secA"/>
    <property type="match status" value="1"/>
</dbReference>
<dbReference type="PANTHER" id="PTHR30612:SF0">
    <property type="entry name" value="CHLOROPLAST PROTEIN-TRANSPORTING ATPASE"/>
    <property type="match status" value="1"/>
</dbReference>
<dbReference type="PANTHER" id="PTHR30612">
    <property type="entry name" value="SECA INNER MEMBRANE COMPONENT OF SEC PROTEIN SECRETION SYSTEM"/>
    <property type="match status" value="1"/>
</dbReference>
<dbReference type="Pfam" id="PF21090">
    <property type="entry name" value="P-loop_SecA"/>
    <property type="match status" value="1"/>
</dbReference>
<dbReference type="Pfam" id="PF02810">
    <property type="entry name" value="SEC-C"/>
    <property type="match status" value="1"/>
</dbReference>
<dbReference type="Pfam" id="PF07517">
    <property type="entry name" value="SecA_DEAD"/>
    <property type="match status" value="1"/>
</dbReference>
<dbReference type="Pfam" id="PF01043">
    <property type="entry name" value="SecA_PP_bind"/>
    <property type="match status" value="1"/>
</dbReference>
<dbReference type="Pfam" id="PF07516">
    <property type="entry name" value="SecA_SW"/>
    <property type="match status" value="1"/>
</dbReference>
<dbReference type="PRINTS" id="PR00906">
    <property type="entry name" value="SECA"/>
</dbReference>
<dbReference type="SMART" id="SM00957">
    <property type="entry name" value="SecA_DEAD"/>
    <property type="match status" value="1"/>
</dbReference>
<dbReference type="SMART" id="SM00958">
    <property type="entry name" value="SecA_PP_bind"/>
    <property type="match status" value="1"/>
</dbReference>
<dbReference type="SUPFAM" id="SSF81886">
    <property type="entry name" value="Helical scaffold and wing domains of SecA"/>
    <property type="match status" value="1"/>
</dbReference>
<dbReference type="SUPFAM" id="SSF52540">
    <property type="entry name" value="P-loop containing nucleoside triphosphate hydrolases"/>
    <property type="match status" value="2"/>
</dbReference>
<dbReference type="SUPFAM" id="SSF81767">
    <property type="entry name" value="Pre-protein crosslinking domain of SecA"/>
    <property type="match status" value="1"/>
</dbReference>
<dbReference type="PROSITE" id="PS01312">
    <property type="entry name" value="SECA"/>
    <property type="match status" value="1"/>
</dbReference>
<dbReference type="PROSITE" id="PS51196">
    <property type="entry name" value="SECA_MOTOR_DEAD"/>
    <property type="match status" value="1"/>
</dbReference>
<gene>
    <name evidence="1" type="primary">secA</name>
    <name type="ordered locus">PG_0514</name>
</gene>
<keyword id="KW-0067">ATP-binding</keyword>
<keyword id="KW-0997">Cell inner membrane</keyword>
<keyword id="KW-1003">Cell membrane</keyword>
<keyword id="KW-0963">Cytoplasm</keyword>
<keyword id="KW-0472">Membrane</keyword>
<keyword id="KW-0479">Metal-binding</keyword>
<keyword id="KW-0547">Nucleotide-binding</keyword>
<keyword id="KW-0653">Protein transport</keyword>
<keyword id="KW-1185">Reference proteome</keyword>
<keyword id="KW-1278">Translocase</keyword>
<keyword id="KW-0811">Translocation</keyword>
<keyword id="KW-0813">Transport</keyword>
<keyword id="KW-0862">Zinc</keyword>
<name>SECA_PORGI</name>
<sequence>MSKLFGNKSQRDLKEVKPFVDKIKVAYGEIERLSDDDLRGRTAILRQKIQDYVKDERAEIDKLKVEVEGKDLDEREEIWAQVDKLEKEILDKMEVVLDEILPEAFAIIKDTARRFAQNETIRVKATDLDRDLAINHDFVSIEGDTAVYQNHWVAGGNEILWDMIHYDVQLIGGTVLHKGKIAEMATGEGKTLVATLPVFLNALTGNGVHVVTVNDYLSKRDSEWMGPLYMFHGLTVDCIDKHQPNSDARRKAYNADITFGTNNEFGFDYLRDNMATSPKDLVQRKHNYAIVDEVDSVLIDDARTPLIISGPTPKGEDQLFEEFLPNVEKVVEAQRKLCSQLLIDAKNKMASEDKKEQEEGSLLLFRSFKGLPKNKQLIKYLSEPGIKSSMLKTEEAYMAENMRNMHLVTDELYFIIDEKRNSVELTEKGIDLLTSRTDDPKFFVLPDIAAELSALDNMESDAEKRREAKDEIIANYSIKSERVHTVNQLLKAYALFEKDDQYVVMDNKVLIVDEQTGRIMDGRRYSDGLHQAIEAKEHVKVEAATQTFATITLQNYFRMYHKLAGMTGTAETEAGELWDIYKLDVVVIPTNKPIARKDMNDRIYKTAREKYAAVIEEIVRLVEEGRPVLVGTTSVEISELLSRMLRLRGIQHNVLNAKLHQKEAEIVAQAGQKGTVTIATNMAGRGTDIKLSAEVKKAGGLAIIGTERHESRRVDRQLRGRSGRQGDPGSSIFYVSLEDHLMRLFATEKIASLMDRLGFKEGEVLENNMLSKSVERAQKKVEENNFGIRKHLLEYDDVMNSQREVIYTRRRHALMGERIGMDVLNTIYDVCKALIDNYAEANDFEGFKEDLMRALAIESPITQEIFRGKKAEELTDMLFDEAYKSFQRKMDLIAEVAHPVVHQVFETQAAVYERILIPITDGKRVYNIGCNLREADETQGKSIIKEFEKAIVLHTIDESWKEHLREMDELRNSVQNASYENKDPLLIYKLESYELFRKMVEAMNRKTVAILMRARIPVPEAPSQEELEHRRQIEIRHAAEQRTDMSKYRTQKDDIEAQQKAQRDAASRPQGAAAPQTPIRNENKIGRNDPCPCGSGKKFKQCHGRNL</sequence>
<proteinExistence type="inferred from homology"/>
<organism>
    <name type="scientific">Porphyromonas gingivalis (strain ATCC BAA-308 / W83)</name>
    <dbReference type="NCBI Taxonomy" id="242619"/>
    <lineage>
        <taxon>Bacteria</taxon>
        <taxon>Pseudomonadati</taxon>
        <taxon>Bacteroidota</taxon>
        <taxon>Bacteroidia</taxon>
        <taxon>Bacteroidales</taxon>
        <taxon>Porphyromonadaceae</taxon>
        <taxon>Porphyromonas</taxon>
    </lineage>
</organism>
<accession>Q7MWS5</accession>
<protein>
    <recommendedName>
        <fullName evidence="1">Protein translocase subunit SecA</fullName>
        <ecNumber evidence="1">7.4.2.8</ecNumber>
    </recommendedName>
</protein>
<comment type="function">
    <text evidence="1">Part of the Sec protein translocase complex. Interacts with the SecYEG preprotein conducting channel. Has a central role in coupling the hydrolysis of ATP to the transfer of proteins into and across the cell membrane, serving as an ATP-driven molecular motor driving the stepwise translocation of polypeptide chains across the membrane.</text>
</comment>
<comment type="catalytic activity">
    <reaction evidence="1">
        <text>ATP + H2O + cellular proteinSide 1 = ADP + phosphate + cellular proteinSide 2.</text>
        <dbReference type="EC" id="7.4.2.8"/>
    </reaction>
</comment>
<comment type="cofactor">
    <cofactor evidence="1">
        <name>Zn(2+)</name>
        <dbReference type="ChEBI" id="CHEBI:29105"/>
    </cofactor>
    <text evidence="1">May bind 1 zinc ion per subunit.</text>
</comment>
<comment type="subunit">
    <text evidence="1">Monomer and homodimer. Part of the essential Sec protein translocation apparatus which comprises SecA, SecYEG and auxiliary proteins SecDF. Other proteins may also be involved.</text>
</comment>
<comment type="subcellular location">
    <subcellularLocation>
        <location evidence="1">Cell inner membrane</location>
        <topology evidence="1">Peripheral membrane protein</topology>
        <orientation evidence="1">Cytoplasmic side</orientation>
    </subcellularLocation>
    <subcellularLocation>
        <location evidence="1">Cytoplasm</location>
    </subcellularLocation>
    <text evidence="1">Distribution is 50-50.</text>
</comment>
<comment type="similarity">
    <text evidence="1">Belongs to the SecA family.</text>
</comment>